<proteinExistence type="inferred from homology"/>
<reference key="1">
    <citation type="journal article" date="2006" name="J. Bacteriol.">
        <title>Pathogenomic sequence analysis of Bacillus cereus and Bacillus thuringiensis isolates closely related to Bacillus anthracis.</title>
        <authorList>
            <person name="Han C.S."/>
            <person name="Xie G."/>
            <person name="Challacombe J.F."/>
            <person name="Altherr M.R."/>
            <person name="Bhotika S.S."/>
            <person name="Bruce D."/>
            <person name="Campbell C.S."/>
            <person name="Campbell M.L."/>
            <person name="Chen J."/>
            <person name="Chertkov O."/>
            <person name="Cleland C."/>
            <person name="Dimitrijevic M."/>
            <person name="Doggett N.A."/>
            <person name="Fawcett J.J."/>
            <person name="Glavina T."/>
            <person name="Goodwin L.A."/>
            <person name="Hill K.K."/>
            <person name="Hitchcock P."/>
            <person name="Jackson P.J."/>
            <person name="Keim P."/>
            <person name="Kewalramani A.R."/>
            <person name="Longmire J."/>
            <person name="Lucas S."/>
            <person name="Malfatti S."/>
            <person name="McMurry K."/>
            <person name="Meincke L.J."/>
            <person name="Misra M."/>
            <person name="Moseman B.L."/>
            <person name="Mundt M."/>
            <person name="Munk A.C."/>
            <person name="Okinaka R.T."/>
            <person name="Parson-Quintana B."/>
            <person name="Reilly L.P."/>
            <person name="Richardson P."/>
            <person name="Robinson D.L."/>
            <person name="Rubin E."/>
            <person name="Saunders E."/>
            <person name="Tapia R."/>
            <person name="Tesmer J.G."/>
            <person name="Thayer N."/>
            <person name="Thompson L.S."/>
            <person name="Tice H."/>
            <person name="Ticknor L.O."/>
            <person name="Wills P.L."/>
            <person name="Brettin T.S."/>
            <person name="Gilna P."/>
        </authorList>
    </citation>
    <scope>NUCLEOTIDE SEQUENCE [LARGE SCALE GENOMIC DNA]</scope>
    <source>
        <strain>97-27</strain>
    </source>
</reference>
<organism>
    <name type="scientific">Bacillus thuringiensis subsp. konkukian (strain 97-27)</name>
    <dbReference type="NCBI Taxonomy" id="281309"/>
    <lineage>
        <taxon>Bacteria</taxon>
        <taxon>Bacillati</taxon>
        <taxon>Bacillota</taxon>
        <taxon>Bacilli</taxon>
        <taxon>Bacillales</taxon>
        <taxon>Bacillaceae</taxon>
        <taxon>Bacillus</taxon>
        <taxon>Bacillus cereus group</taxon>
    </lineage>
</organism>
<evidence type="ECO:0000255" key="1">
    <source>
        <dbReference type="HAMAP-Rule" id="MF_01691"/>
    </source>
</evidence>
<keyword id="KW-0012">Acyltransferase</keyword>
<keyword id="KW-0028">Amino-acid biosynthesis</keyword>
<keyword id="KW-0220">Diaminopimelate biosynthesis</keyword>
<keyword id="KW-0457">Lysine biosynthesis</keyword>
<keyword id="KW-0677">Repeat</keyword>
<keyword id="KW-0808">Transferase</keyword>
<sequence>MKMMDANEIISFIQKSEKKTPVKVYIKGDLKEVTFPETVQAFVNKKSGVLFGEWSEIKTILDENSKYIVDYVVENDRRNSAIPMLDLKGIKARIEPGAIIRDHVEIGDNAVIMMNATINIGAVIGEGSMIDMNAVLGGRATVGKNCHVGAGAVLAGVIEPPSAKPVIVEDDVVIGANVVVLEGVTVGKGAVVAAGAVVTEDVPPYTVVAGTPARVIKEIDEKTKAKTEIKQELRQLNPEK</sequence>
<comment type="function">
    <text evidence="1">Catalyzes the transfer of an acetyl group from acetyl-CoA to tetrahydrodipicolinate.</text>
</comment>
<comment type="catalytic activity">
    <reaction evidence="1">
        <text>(S)-2,3,4,5-tetrahydrodipicolinate + acetyl-CoA + H2O = L-2-acetamido-6-oxoheptanedioate + CoA</text>
        <dbReference type="Rhea" id="RHEA:13085"/>
        <dbReference type="ChEBI" id="CHEBI:15377"/>
        <dbReference type="ChEBI" id="CHEBI:16845"/>
        <dbReference type="ChEBI" id="CHEBI:57287"/>
        <dbReference type="ChEBI" id="CHEBI:57288"/>
        <dbReference type="ChEBI" id="CHEBI:58117"/>
        <dbReference type="EC" id="2.3.1.89"/>
    </reaction>
</comment>
<comment type="pathway">
    <text evidence="1">Amino-acid biosynthesis; L-lysine biosynthesis via DAP pathway; LL-2,6-diaminopimelate from (S)-tetrahydrodipicolinate (acetylase route): step 1/3.</text>
</comment>
<comment type="similarity">
    <text evidence="1">Belongs to the transferase hexapeptide repeat family. DapH subfamily.</text>
</comment>
<dbReference type="EC" id="2.3.1.89" evidence="1"/>
<dbReference type="EMBL" id="AE017355">
    <property type="protein sequence ID" value="AAT60686.1"/>
    <property type="molecule type" value="Genomic_DNA"/>
</dbReference>
<dbReference type="RefSeq" id="YP_038042.1">
    <property type="nucleotide sequence ID" value="NC_005957.1"/>
</dbReference>
<dbReference type="SMR" id="Q6HEI4"/>
<dbReference type="KEGG" id="btk:BT9727_3723"/>
<dbReference type="PATRIC" id="fig|281309.8.peg.3965"/>
<dbReference type="HOGENOM" id="CLU_103751_0_0_9"/>
<dbReference type="UniPathway" id="UPA00034">
    <property type="reaction ID" value="UER00022"/>
</dbReference>
<dbReference type="Proteomes" id="UP000001301">
    <property type="component" value="Chromosome"/>
</dbReference>
<dbReference type="GO" id="GO:0047200">
    <property type="term" value="F:tetrahydrodipicolinate N-acetyltransferase activity"/>
    <property type="evidence" value="ECO:0007669"/>
    <property type="project" value="UniProtKB-EC"/>
</dbReference>
<dbReference type="GO" id="GO:0019877">
    <property type="term" value="P:diaminopimelate biosynthetic process"/>
    <property type="evidence" value="ECO:0007669"/>
    <property type="project" value="UniProtKB-UniRule"/>
</dbReference>
<dbReference type="GO" id="GO:0009089">
    <property type="term" value="P:lysine biosynthetic process via diaminopimelate"/>
    <property type="evidence" value="ECO:0007669"/>
    <property type="project" value="UniProtKB-UniRule"/>
</dbReference>
<dbReference type="CDD" id="cd03350">
    <property type="entry name" value="LbH_THP_succinylT"/>
    <property type="match status" value="1"/>
</dbReference>
<dbReference type="Gene3D" id="2.160.10.10">
    <property type="entry name" value="Hexapeptide repeat proteins"/>
    <property type="match status" value="1"/>
</dbReference>
<dbReference type="Gene3D" id="3.30.70.250">
    <property type="entry name" value="Malonyl-CoA ACP transacylase, ACP-binding"/>
    <property type="match status" value="1"/>
</dbReference>
<dbReference type="HAMAP" id="MF_01691">
    <property type="entry name" value="DapH"/>
    <property type="match status" value="1"/>
</dbReference>
<dbReference type="InterPro" id="IPR019873">
    <property type="entry name" value="DapH"/>
</dbReference>
<dbReference type="InterPro" id="IPR013710">
    <property type="entry name" value="DapH_N"/>
</dbReference>
<dbReference type="InterPro" id="IPR001451">
    <property type="entry name" value="Hexapep"/>
</dbReference>
<dbReference type="InterPro" id="IPR018357">
    <property type="entry name" value="Hexapep_transf_CS"/>
</dbReference>
<dbReference type="InterPro" id="IPR050179">
    <property type="entry name" value="Trans_hexapeptide_repeat"/>
</dbReference>
<dbReference type="InterPro" id="IPR011004">
    <property type="entry name" value="Trimer_LpxA-like_sf"/>
</dbReference>
<dbReference type="NCBIfam" id="TIGR03532">
    <property type="entry name" value="DapD_Ac"/>
    <property type="match status" value="1"/>
</dbReference>
<dbReference type="PANTHER" id="PTHR43300:SF10">
    <property type="entry name" value="2,3,4,5-TETRAHYDROPYRIDINE-2,6-DICARBOXYLATE N-ACETYLTRANSFERASE"/>
    <property type="match status" value="1"/>
</dbReference>
<dbReference type="PANTHER" id="PTHR43300">
    <property type="entry name" value="ACETYLTRANSFERASE"/>
    <property type="match status" value="1"/>
</dbReference>
<dbReference type="Pfam" id="PF08503">
    <property type="entry name" value="DapH_N"/>
    <property type="match status" value="1"/>
</dbReference>
<dbReference type="Pfam" id="PF00132">
    <property type="entry name" value="Hexapep"/>
    <property type="match status" value="1"/>
</dbReference>
<dbReference type="Pfam" id="PF14602">
    <property type="entry name" value="Hexapep_2"/>
    <property type="match status" value="1"/>
</dbReference>
<dbReference type="SUPFAM" id="SSF51161">
    <property type="entry name" value="Trimeric LpxA-like enzymes"/>
    <property type="match status" value="1"/>
</dbReference>
<dbReference type="PROSITE" id="PS00101">
    <property type="entry name" value="HEXAPEP_TRANSFERASES"/>
    <property type="match status" value="1"/>
</dbReference>
<gene>
    <name evidence="1" type="primary">dapH</name>
    <name type="ordered locus">BT9727_3723</name>
</gene>
<feature type="chain" id="PRO_0000376640" description="2,3,4,5-tetrahydropyridine-2,6-dicarboxylate N-acetyltransferase">
    <location>
        <begin position="1"/>
        <end position="240"/>
    </location>
</feature>
<protein>
    <recommendedName>
        <fullName evidence="1">2,3,4,5-tetrahydropyridine-2,6-dicarboxylate N-acetyltransferase</fullName>
        <ecNumber evidence="1">2.3.1.89</ecNumber>
    </recommendedName>
    <alternativeName>
        <fullName evidence="1">Tetrahydrodipicolinate N-acetyltransferase</fullName>
        <shortName evidence="1">THP acetyltransferase</shortName>
        <shortName evidence="1">Tetrahydropicolinate acetylase</shortName>
    </alternativeName>
</protein>
<accession>Q6HEI4</accession>
<name>DAPH_BACHK</name>